<reference key="1">
    <citation type="submission" date="1999-08" db="EMBL/GenBank/DDBJ databases">
        <authorList>
            <person name="Um H.W."/>
            <person name="Kang H.S."/>
        </authorList>
    </citation>
    <scope>NUCLEOTIDE SEQUENCE [GENOMIC DNA]</scope>
    <source>
        <strain>ATCC 31821 / ZM4 / CP4</strain>
    </source>
</reference>
<reference key="2">
    <citation type="journal article" date="2005" name="Nat. Biotechnol.">
        <title>The genome sequence of the ethanologenic bacterium Zymomonas mobilis ZM4.</title>
        <authorList>
            <person name="Seo J.-S."/>
            <person name="Chong H."/>
            <person name="Park H.S."/>
            <person name="Yoon K.-O."/>
            <person name="Jung C."/>
            <person name="Kim J.J."/>
            <person name="Hong J.H."/>
            <person name="Kim H."/>
            <person name="Kim J.-H."/>
            <person name="Kil J.-I."/>
            <person name="Park C.J."/>
            <person name="Oh H.-M."/>
            <person name="Lee J.-S."/>
            <person name="Jin S.-J."/>
            <person name="Um H.-W."/>
            <person name="Lee H.-J."/>
            <person name="Oh S.-J."/>
            <person name="Kim J.Y."/>
            <person name="Kang H.L."/>
            <person name="Lee S.Y."/>
            <person name="Lee K.J."/>
            <person name="Kang H.S."/>
        </authorList>
    </citation>
    <scope>NUCLEOTIDE SEQUENCE [LARGE SCALE GENOMIC DNA]</scope>
    <source>
        <strain>ATCC 31821 / ZM4 / CP4</strain>
    </source>
</reference>
<organism>
    <name type="scientific">Zymomonas mobilis subsp. mobilis (strain ATCC 31821 / ZM4 / CP4)</name>
    <dbReference type="NCBI Taxonomy" id="264203"/>
    <lineage>
        <taxon>Bacteria</taxon>
        <taxon>Pseudomonadati</taxon>
        <taxon>Pseudomonadota</taxon>
        <taxon>Alphaproteobacteria</taxon>
        <taxon>Sphingomonadales</taxon>
        <taxon>Zymomonadaceae</taxon>
        <taxon>Zymomonas</taxon>
    </lineage>
</organism>
<protein>
    <recommendedName>
        <fullName evidence="1">UDP-N-acetylglucosamine--N-acetylmuramyl-(pentapeptide) pyrophosphoryl-undecaprenol N-acetylglucosamine transferase</fullName>
        <ecNumber evidence="1">2.4.1.227</ecNumber>
    </recommendedName>
    <alternativeName>
        <fullName evidence="1">Undecaprenyl-PP-MurNAc-pentapeptide-UDPGlcNAc GlcNAc transferase</fullName>
    </alternativeName>
</protein>
<sequence>MNGSRQYILAAGGTGGHMIPAHALAVELMRRGHHVALVTDERGTRFPELFKDVQIHQLPAGRLTGGVKGLFQAMRNIWAGRERALTLYENFTPAAVVGFGGYPALPALLAAFKAKIPTVIHEQNAVMGRTNRFLAGRVDAIATAYHQVDRLKKRYRRKTEVTGNPVRDEVLFLRDLPYPPLSDNSIFRILVVGGSQGASILSEVVPEGLGLLPLHLRRRLQVTQQCRPEDLEKTRAQYAKLGIPADISTYMADLPQRLGWSHLVISRAGASTIAELGVAGRPAILIPYPAAMDNHQYANARELVSAGGARLIDQRRFNPFELAKQIQKMALEPSALKNAAARARQVGYPDAVEKLADLVERVGGNLPQQNSIEEDSTFEKNQEGAVA</sequence>
<comment type="function">
    <text evidence="1">Cell wall formation. Catalyzes the transfer of a GlcNAc subunit on undecaprenyl-pyrophosphoryl-MurNAc-pentapeptide (lipid intermediate I) to form undecaprenyl-pyrophosphoryl-MurNAc-(pentapeptide)GlcNAc (lipid intermediate II).</text>
</comment>
<comment type="catalytic activity">
    <reaction evidence="1">
        <text>di-trans,octa-cis-undecaprenyl diphospho-N-acetyl-alpha-D-muramoyl-L-alanyl-D-glutamyl-meso-2,6-diaminopimeloyl-D-alanyl-D-alanine + UDP-N-acetyl-alpha-D-glucosamine = di-trans,octa-cis-undecaprenyl diphospho-[N-acetyl-alpha-D-glucosaminyl-(1-&gt;4)]-N-acetyl-alpha-D-muramoyl-L-alanyl-D-glutamyl-meso-2,6-diaminopimeloyl-D-alanyl-D-alanine + UDP + H(+)</text>
        <dbReference type="Rhea" id="RHEA:31227"/>
        <dbReference type="ChEBI" id="CHEBI:15378"/>
        <dbReference type="ChEBI" id="CHEBI:57705"/>
        <dbReference type="ChEBI" id="CHEBI:58223"/>
        <dbReference type="ChEBI" id="CHEBI:61387"/>
        <dbReference type="ChEBI" id="CHEBI:61388"/>
        <dbReference type="EC" id="2.4.1.227"/>
    </reaction>
</comment>
<comment type="pathway">
    <text evidence="1">Cell wall biogenesis; peptidoglycan biosynthesis.</text>
</comment>
<comment type="subcellular location">
    <subcellularLocation>
        <location evidence="1">Cell inner membrane</location>
        <topology evidence="1">Peripheral membrane protein</topology>
        <orientation evidence="1">Cytoplasmic side</orientation>
    </subcellularLocation>
</comment>
<comment type="similarity">
    <text evidence="1">Belongs to the glycosyltransferase 28 family. MurG subfamily.</text>
</comment>
<name>MURG_ZYMMO</name>
<dbReference type="EC" id="2.4.1.227" evidence="1"/>
<dbReference type="EMBL" id="AF179611">
    <property type="protein sequence ID" value="AAD53936.1"/>
    <property type="molecule type" value="Genomic_DNA"/>
</dbReference>
<dbReference type="EMBL" id="AE008692">
    <property type="protein sequence ID" value="AAV89455.1"/>
    <property type="molecule type" value="Genomic_DNA"/>
</dbReference>
<dbReference type="RefSeq" id="WP_011240701.1">
    <property type="nucleotide sequence ID" value="NZ_CP035711.1"/>
</dbReference>
<dbReference type="SMR" id="Q9RNM6"/>
<dbReference type="STRING" id="264203.ZMO0831"/>
<dbReference type="CAZy" id="GT28">
    <property type="family name" value="Glycosyltransferase Family 28"/>
</dbReference>
<dbReference type="KEGG" id="zmo:ZMO0831"/>
<dbReference type="eggNOG" id="COG0707">
    <property type="taxonomic scope" value="Bacteria"/>
</dbReference>
<dbReference type="HOGENOM" id="CLU_037404_2_1_5"/>
<dbReference type="UniPathway" id="UPA00219"/>
<dbReference type="Proteomes" id="UP000001173">
    <property type="component" value="Chromosome"/>
</dbReference>
<dbReference type="GO" id="GO:0005886">
    <property type="term" value="C:plasma membrane"/>
    <property type="evidence" value="ECO:0007669"/>
    <property type="project" value="UniProtKB-SubCell"/>
</dbReference>
<dbReference type="GO" id="GO:0051991">
    <property type="term" value="F:UDP-N-acetyl-D-glucosamine:N-acetylmuramoyl-L-alanyl-D-glutamyl-meso-2,6-diaminopimelyl-D-alanyl-D-alanine-diphosphoundecaprenol 4-beta-N-acetylglucosaminlytransferase activity"/>
    <property type="evidence" value="ECO:0007669"/>
    <property type="project" value="RHEA"/>
</dbReference>
<dbReference type="GO" id="GO:0050511">
    <property type="term" value="F:undecaprenyldiphospho-muramoylpentapeptide beta-N-acetylglucosaminyltransferase activity"/>
    <property type="evidence" value="ECO:0007669"/>
    <property type="project" value="UniProtKB-UniRule"/>
</dbReference>
<dbReference type="GO" id="GO:0005975">
    <property type="term" value="P:carbohydrate metabolic process"/>
    <property type="evidence" value="ECO:0007669"/>
    <property type="project" value="InterPro"/>
</dbReference>
<dbReference type="GO" id="GO:0051301">
    <property type="term" value="P:cell division"/>
    <property type="evidence" value="ECO:0007669"/>
    <property type="project" value="UniProtKB-KW"/>
</dbReference>
<dbReference type="GO" id="GO:0071555">
    <property type="term" value="P:cell wall organization"/>
    <property type="evidence" value="ECO:0007669"/>
    <property type="project" value="UniProtKB-KW"/>
</dbReference>
<dbReference type="GO" id="GO:0030259">
    <property type="term" value="P:lipid glycosylation"/>
    <property type="evidence" value="ECO:0007669"/>
    <property type="project" value="UniProtKB-UniRule"/>
</dbReference>
<dbReference type="GO" id="GO:0009252">
    <property type="term" value="P:peptidoglycan biosynthetic process"/>
    <property type="evidence" value="ECO:0007669"/>
    <property type="project" value="UniProtKB-UniRule"/>
</dbReference>
<dbReference type="GO" id="GO:0008360">
    <property type="term" value="P:regulation of cell shape"/>
    <property type="evidence" value="ECO:0007669"/>
    <property type="project" value="UniProtKB-KW"/>
</dbReference>
<dbReference type="CDD" id="cd03785">
    <property type="entry name" value="GT28_MurG"/>
    <property type="match status" value="1"/>
</dbReference>
<dbReference type="Gene3D" id="3.40.50.2000">
    <property type="entry name" value="Glycogen Phosphorylase B"/>
    <property type="match status" value="2"/>
</dbReference>
<dbReference type="HAMAP" id="MF_00033">
    <property type="entry name" value="MurG"/>
    <property type="match status" value="1"/>
</dbReference>
<dbReference type="InterPro" id="IPR006009">
    <property type="entry name" value="GlcNAc_MurG"/>
</dbReference>
<dbReference type="InterPro" id="IPR007235">
    <property type="entry name" value="Glyco_trans_28_C"/>
</dbReference>
<dbReference type="InterPro" id="IPR004276">
    <property type="entry name" value="GlycoTrans_28_N"/>
</dbReference>
<dbReference type="NCBIfam" id="TIGR01133">
    <property type="entry name" value="murG"/>
    <property type="match status" value="1"/>
</dbReference>
<dbReference type="PANTHER" id="PTHR21015:SF22">
    <property type="entry name" value="GLYCOSYLTRANSFERASE"/>
    <property type="match status" value="1"/>
</dbReference>
<dbReference type="PANTHER" id="PTHR21015">
    <property type="entry name" value="UDP-N-ACETYLGLUCOSAMINE--N-ACETYLMURAMYL-(PENTAPEPTIDE) PYROPHOSPHORYL-UNDECAPRENOL N-ACETYLGLUCOSAMINE TRANSFERASE 1"/>
    <property type="match status" value="1"/>
</dbReference>
<dbReference type="Pfam" id="PF04101">
    <property type="entry name" value="Glyco_tran_28_C"/>
    <property type="match status" value="1"/>
</dbReference>
<dbReference type="Pfam" id="PF03033">
    <property type="entry name" value="Glyco_transf_28"/>
    <property type="match status" value="1"/>
</dbReference>
<dbReference type="SUPFAM" id="SSF53756">
    <property type="entry name" value="UDP-Glycosyltransferase/glycogen phosphorylase"/>
    <property type="match status" value="1"/>
</dbReference>
<keyword id="KW-0131">Cell cycle</keyword>
<keyword id="KW-0132">Cell division</keyword>
<keyword id="KW-0997">Cell inner membrane</keyword>
<keyword id="KW-1003">Cell membrane</keyword>
<keyword id="KW-0133">Cell shape</keyword>
<keyword id="KW-0961">Cell wall biogenesis/degradation</keyword>
<keyword id="KW-0328">Glycosyltransferase</keyword>
<keyword id="KW-0472">Membrane</keyword>
<keyword id="KW-0573">Peptidoglycan synthesis</keyword>
<keyword id="KW-1185">Reference proteome</keyword>
<keyword id="KW-0808">Transferase</keyword>
<evidence type="ECO:0000255" key="1">
    <source>
        <dbReference type="HAMAP-Rule" id="MF_00033"/>
    </source>
</evidence>
<evidence type="ECO:0000256" key="2">
    <source>
        <dbReference type="SAM" id="MobiDB-lite"/>
    </source>
</evidence>
<evidence type="ECO:0000305" key="3"/>
<proteinExistence type="inferred from homology"/>
<gene>
    <name evidence="1" type="primary">murG</name>
    <name type="ordered locus">ZMO0831</name>
</gene>
<accession>Q9RNM6</accession>
<accession>Q5NPA5</accession>
<feature type="chain" id="PRO_0000109245" description="UDP-N-acetylglucosamine--N-acetylmuramyl-(pentapeptide) pyrophosphoryl-undecaprenol N-acetylglucosamine transferase">
    <location>
        <begin position="1"/>
        <end position="387"/>
    </location>
</feature>
<feature type="region of interest" description="Disordered" evidence="2">
    <location>
        <begin position="366"/>
        <end position="387"/>
    </location>
</feature>
<feature type="compositionally biased region" description="Basic and acidic residues" evidence="2">
    <location>
        <begin position="377"/>
        <end position="387"/>
    </location>
</feature>
<feature type="binding site" evidence="1">
    <location>
        <begin position="14"/>
        <end position="16"/>
    </location>
    <ligand>
        <name>UDP-N-acetyl-alpha-D-glucosamine</name>
        <dbReference type="ChEBI" id="CHEBI:57705"/>
    </ligand>
</feature>
<feature type="binding site" evidence="1">
    <location>
        <position position="124"/>
    </location>
    <ligand>
        <name>UDP-N-acetyl-alpha-D-glucosamine</name>
        <dbReference type="ChEBI" id="CHEBI:57705"/>
    </ligand>
</feature>
<feature type="binding site" evidence="1">
    <location>
        <position position="167"/>
    </location>
    <ligand>
        <name>UDP-N-acetyl-alpha-D-glucosamine</name>
        <dbReference type="ChEBI" id="CHEBI:57705"/>
    </ligand>
</feature>
<feature type="binding site" evidence="1">
    <location>
        <position position="195"/>
    </location>
    <ligand>
        <name>UDP-N-acetyl-alpha-D-glucosamine</name>
        <dbReference type="ChEBI" id="CHEBI:57705"/>
    </ligand>
</feature>
<feature type="binding site" evidence="1">
    <location>
        <position position="296"/>
    </location>
    <ligand>
        <name>UDP-N-acetyl-alpha-D-glucosamine</name>
        <dbReference type="ChEBI" id="CHEBI:57705"/>
    </ligand>
</feature>
<feature type="sequence conflict" description="In Ref. 1; AAD53936." evidence="3" ref="1">
    <original>A</original>
    <variation>G</variation>
    <location>
        <position position="23"/>
    </location>
</feature>
<feature type="sequence conflict" description="In Ref. 1; AAD53936." evidence="3" ref="1">
    <original>R</original>
    <variation>G</variation>
    <location>
        <position position="45"/>
    </location>
</feature>